<protein>
    <recommendedName>
        <fullName>Cellulose synthase catalytic subunit [UDP-forming]</fullName>
        <ecNumber>2.4.1.12</ecNumber>
    </recommendedName>
</protein>
<name>BCSA2_KOMSB</name>
<sequence>MSEVQSPVPTESRLGRISNKILSLRGASYIVGALGLCALIAATTVTLNNNEQLIVAAVCVVIFFVVGRGKSRRTQIFLEVLSALVSLRYLTWRLTETLDFNTWIQGILGVILLMAELYALYMLFLSYFQTIQPLHRAPLPLPDNVDDWPTVDIFIPTYDEQLSIVRLTVLGALGIDWPPDKVNVYILDDGVRPEFEQFAKDCGALYIGRVDVDSAHAKAGNLNHAIKRTSGDYILILDCDHIPTRAFLQIAMGWMVADRKIALMQTPHHFYSPDPFQRNLAVGYRTPPEGNLFYGVIQDGNDFWDATFFCGSCAILRREAIESIGGFAVETVTEDAHTALRMQRRGWSTAYLRIPVASGLATERLTTHIGQRMRWARGMIQIFRVDNPMLGRGLKLGQRLCYLSAMTSFFFAIPRVIFLASPLAFLFAGQNIIAAAPLAVAAYALPHMFHSIATAAKVNKGWRYSFWSEVYETTMALFLVRVTIVTLLFPSKGKFNVTEKGGVLEEEEFDLGATYPNIIFATIMMGGLLIGLFELIVRFNQLDVIARNAYLLNCAWALISLIILFAAIAVGRETKQVRYNHRVEAHIPVTVYDAPAEGQPHTYYNATHGMTQDVSMGGVAVHIPLPDVTTGPVKKRIHAVLDGEEIDIPATMLRCTNGKAVFTWDNNDLDTERDIVRFVFGRADAWLQWNNYEDDRPLRSLWSLLLSIKALFRKKGKIMANSRPKKKPLALPVERREPTTIHSGQTQEGKISRAAS</sequence>
<gene>
    <name type="primary">bcsA</name>
</gene>
<accession>O82859</accession>
<comment type="function">
    <text evidence="1">Catalytic subunit of cellulose synthase. It polymerizes uridine 5'-diphosphate glucose to cellulose. The thick cellulosic mats generated by this enzyme probably provide a specialized protective environment to the bacterium (By similarity).</text>
</comment>
<comment type="catalytic activity">
    <reaction>
        <text>[(1-&gt;4)-beta-D-glucosyl](n) + UDP-alpha-D-glucose = [(1-&gt;4)-beta-D-glucosyl](n+1) + UDP + H(+)</text>
        <dbReference type="Rhea" id="RHEA:19929"/>
        <dbReference type="Rhea" id="RHEA-COMP:10033"/>
        <dbReference type="Rhea" id="RHEA-COMP:10034"/>
        <dbReference type="ChEBI" id="CHEBI:15378"/>
        <dbReference type="ChEBI" id="CHEBI:18246"/>
        <dbReference type="ChEBI" id="CHEBI:58223"/>
        <dbReference type="ChEBI" id="CHEBI:58885"/>
        <dbReference type="EC" id="2.4.1.12"/>
    </reaction>
</comment>
<comment type="cofactor">
    <cofactor evidence="1">
        <name>Mg(2+)</name>
        <dbReference type="ChEBI" id="CHEBI:18420"/>
    </cofactor>
</comment>
<comment type="activity regulation">
    <text>Activated by bis-(3'-5') cyclic diguanylic acid (c-di-GMP).</text>
</comment>
<comment type="pathway">
    <text>Glycan metabolism; bacterial cellulose biosynthesis.</text>
</comment>
<comment type="subcellular location">
    <subcellularLocation>
        <location evidence="4">Cell inner membrane</location>
        <topology evidence="4">Multi-pass membrane protein</topology>
    </subcellularLocation>
</comment>
<comment type="domain">
    <text>There are two conserved domains in the globular part of the catalytic subunit: the N-terminal domain (domain A) contains the conserved DXD motif and is possibly involved in catalysis and substrate binding. The C-terminal domain (domain B) contains the QXXRW motif and is present only in processive glycosyl transferases. It could be involved in the processivity function of the enzyme, possibly required for holding the growing glycan chain in the active site.</text>
</comment>
<comment type="similarity">
    <text evidence="4">Belongs to the glycosyltransferase 2 family.</text>
</comment>
<feature type="chain" id="PRO_0000059263" description="Cellulose synthase catalytic subunit [UDP-forming]">
    <location>
        <begin position="1"/>
        <end position="756"/>
    </location>
</feature>
<feature type="transmembrane region" description="Helical" evidence="2">
    <location>
        <begin position="27"/>
        <end position="47"/>
    </location>
</feature>
<feature type="transmembrane region" description="Helical" evidence="2">
    <location>
        <begin position="49"/>
        <end position="69"/>
    </location>
</feature>
<feature type="transmembrane region" description="Helical" evidence="2">
    <location>
        <begin position="106"/>
        <end position="126"/>
    </location>
</feature>
<feature type="transmembrane region" description="Helical" evidence="2">
    <location>
        <begin position="167"/>
        <end position="187"/>
    </location>
</feature>
<feature type="transmembrane region" description="Helical" evidence="2">
    <location>
        <begin position="409"/>
        <end position="429"/>
    </location>
</feature>
<feature type="transmembrane region" description="Helical" evidence="2">
    <location>
        <begin position="432"/>
        <end position="452"/>
    </location>
</feature>
<feature type="transmembrane region" description="Helical" evidence="2">
    <location>
        <begin position="470"/>
        <end position="490"/>
    </location>
</feature>
<feature type="transmembrane region" description="Helical" evidence="2">
    <location>
        <begin position="517"/>
        <end position="537"/>
    </location>
</feature>
<feature type="transmembrane region" description="Helical" evidence="2">
    <location>
        <begin position="551"/>
        <end position="571"/>
    </location>
</feature>
<feature type="domain" description="PilZ">
    <location>
        <begin position="576"/>
        <end position="681"/>
    </location>
</feature>
<feature type="region of interest" description="Catalytic subdomain A">
    <location>
        <begin position="147"/>
        <end position="242"/>
    </location>
</feature>
<feature type="region of interest" description="Catalytic subdomain B">
    <location>
        <begin position="319"/>
        <end position="379"/>
    </location>
</feature>
<feature type="region of interest" description="Disordered" evidence="3">
    <location>
        <begin position="721"/>
        <end position="756"/>
    </location>
</feature>
<feature type="compositionally biased region" description="Polar residues" evidence="3">
    <location>
        <begin position="740"/>
        <end position="756"/>
    </location>
</feature>
<feature type="active site" evidence="2">
    <location>
        <position position="189"/>
    </location>
</feature>
<feature type="active site" evidence="2">
    <location>
        <position position="335"/>
    </location>
</feature>
<feature type="binding site" evidence="2">
    <location>
        <position position="238"/>
    </location>
    <ligand>
        <name>substrate</name>
    </ligand>
</feature>
<feature type="binding site" evidence="2">
    <location>
        <position position="240"/>
    </location>
    <ligand>
        <name>substrate</name>
    </ligand>
</feature>
<evidence type="ECO:0000250" key="1"/>
<evidence type="ECO:0000255" key="2"/>
<evidence type="ECO:0000256" key="3">
    <source>
        <dbReference type="SAM" id="MobiDB-lite"/>
    </source>
</evidence>
<evidence type="ECO:0000305" key="4"/>
<reference key="1">
    <citation type="journal article" date="1998" name="Gene">
        <title>Control of expression by the cellulose synthase (bcsA) promoter region from Acetobacter xylinum BPR 2001.</title>
        <authorList>
            <person name="Nakai T."/>
            <person name="Moriya A."/>
            <person name="Tonouchi N."/>
            <person name="Tsuchida T."/>
            <person name="Yoshinaga F."/>
            <person name="Horinouchi S."/>
            <person name="Sone Y."/>
            <person name="Mori H."/>
            <person name="Sakai F."/>
            <person name="Hayashi T."/>
        </authorList>
    </citation>
    <scope>NUCLEOTIDE SEQUENCE [GENOMIC DNA]</scope>
    <source>
        <strain>ATCC 700178 / DSM 15973 / CECT 7291 / JCM 9730 / LMG 18788 / BPR 2001</strain>
    </source>
</reference>
<proteinExistence type="inferred from homology"/>
<keyword id="KW-0973">c-di-GMP</keyword>
<keyword id="KW-0997">Cell inner membrane</keyword>
<keyword id="KW-1003">Cell membrane</keyword>
<keyword id="KW-0135">Cellulose biosynthesis</keyword>
<keyword id="KW-0328">Glycosyltransferase</keyword>
<keyword id="KW-0472">Membrane</keyword>
<keyword id="KW-0808">Transferase</keyword>
<keyword id="KW-0812">Transmembrane</keyword>
<keyword id="KW-1133">Transmembrane helix</keyword>
<organism>
    <name type="scientific">Komagataeibacter sucrofermentans (strain ATCC 700178 / DSM 15973 / CECT 7291 / JCM 9730 / LMG 18788 / BPR 2001)</name>
    <name type="common">Acetobacter xylinus subsp. sucrofermentans</name>
    <dbReference type="NCBI Taxonomy" id="1307942"/>
    <lineage>
        <taxon>Bacteria</taxon>
        <taxon>Pseudomonadati</taxon>
        <taxon>Pseudomonadota</taxon>
        <taxon>Alphaproteobacteria</taxon>
        <taxon>Acetobacterales</taxon>
        <taxon>Acetobacteraceae</taxon>
        <taxon>Komagataeibacter</taxon>
    </lineage>
</organism>
<dbReference type="EC" id="2.4.1.12"/>
<dbReference type="EMBL" id="AB010645">
    <property type="protein sequence ID" value="BAA31463.1"/>
    <property type="molecule type" value="Genomic_DNA"/>
</dbReference>
<dbReference type="SMR" id="O82859"/>
<dbReference type="CAZy" id="GT2">
    <property type="family name" value="Glycosyltransferase Family 2"/>
</dbReference>
<dbReference type="UniPathway" id="UPA00694"/>
<dbReference type="GO" id="GO:0005886">
    <property type="term" value="C:plasma membrane"/>
    <property type="evidence" value="ECO:0007669"/>
    <property type="project" value="UniProtKB-SubCell"/>
</dbReference>
<dbReference type="GO" id="GO:0016760">
    <property type="term" value="F:cellulose synthase (UDP-forming) activity"/>
    <property type="evidence" value="ECO:0007669"/>
    <property type="project" value="UniProtKB-EC"/>
</dbReference>
<dbReference type="GO" id="GO:0035438">
    <property type="term" value="F:cyclic-di-GMP binding"/>
    <property type="evidence" value="ECO:0007669"/>
    <property type="project" value="InterPro"/>
</dbReference>
<dbReference type="GO" id="GO:0030244">
    <property type="term" value="P:cellulose biosynthetic process"/>
    <property type="evidence" value="ECO:0007669"/>
    <property type="project" value="UniProtKB-KW"/>
</dbReference>
<dbReference type="GO" id="GO:0006011">
    <property type="term" value="P:UDP-alpha-D-glucose metabolic process"/>
    <property type="evidence" value="ECO:0007669"/>
    <property type="project" value="InterPro"/>
</dbReference>
<dbReference type="CDD" id="cd06421">
    <property type="entry name" value="CESA_CelA_like"/>
    <property type="match status" value="1"/>
</dbReference>
<dbReference type="Gene3D" id="2.40.10.220">
    <property type="entry name" value="predicted glycosyltransferase like domains"/>
    <property type="match status" value="1"/>
</dbReference>
<dbReference type="Gene3D" id="3.90.550.10">
    <property type="entry name" value="Spore Coat Polysaccharide Biosynthesis Protein SpsA, Chain A"/>
    <property type="match status" value="1"/>
</dbReference>
<dbReference type="InterPro" id="IPR003919">
    <property type="entry name" value="Cell_synth_A"/>
</dbReference>
<dbReference type="InterPro" id="IPR001173">
    <property type="entry name" value="Glyco_trans_2-like"/>
</dbReference>
<dbReference type="InterPro" id="IPR050321">
    <property type="entry name" value="Glycosyltr_2/OpgH_subfam"/>
</dbReference>
<dbReference type="InterPro" id="IPR029044">
    <property type="entry name" value="Nucleotide-diphossugar_trans"/>
</dbReference>
<dbReference type="InterPro" id="IPR009875">
    <property type="entry name" value="PilZ_domain"/>
</dbReference>
<dbReference type="NCBIfam" id="TIGR03030">
    <property type="entry name" value="CelA"/>
    <property type="match status" value="1"/>
</dbReference>
<dbReference type="PANTHER" id="PTHR43867">
    <property type="entry name" value="CELLULOSE SYNTHASE CATALYTIC SUBUNIT A [UDP-FORMING]"/>
    <property type="match status" value="1"/>
</dbReference>
<dbReference type="PANTHER" id="PTHR43867:SF2">
    <property type="entry name" value="CELLULOSE SYNTHASE CATALYTIC SUBUNIT A [UDP-FORMING]"/>
    <property type="match status" value="1"/>
</dbReference>
<dbReference type="Pfam" id="PF13632">
    <property type="entry name" value="Glyco_trans_2_3"/>
    <property type="match status" value="1"/>
</dbReference>
<dbReference type="Pfam" id="PF07238">
    <property type="entry name" value="PilZ"/>
    <property type="match status" value="1"/>
</dbReference>
<dbReference type="PRINTS" id="PR01439">
    <property type="entry name" value="CELLSNTHASEA"/>
</dbReference>
<dbReference type="SUPFAM" id="SSF53448">
    <property type="entry name" value="Nucleotide-diphospho-sugar transferases"/>
    <property type="match status" value="1"/>
</dbReference>